<protein>
    <recommendedName>
        <fullName evidence="1">DNA repair protein RecO</fullName>
    </recommendedName>
    <alternativeName>
        <fullName evidence="1">Recombination protein O</fullName>
    </alternativeName>
</protein>
<keyword id="KW-0227">DNA damage</keyword>
<keyword id="KW-0233">DNA recombination</keyword>
<keyword id="KW-0234">DNA repair</keyword>
<keyword id="KW-1185">Reference proteome</keyword>
<comment type="function">
    <text evidence="1">Involved in DNA repair and RecF pathway recombination.</text>
</comment>
<comment type="similarity">
    <text evidence="1">Belongs to the RecO family.</text>
</comment>
<accession>Q2JDJ2</accession>
<sequence>MPVYRDEGVVLRTAPLAEADRIITVLTRRTGRVRAVAKGVRKTSSRFGSRLEPGTYVDLLLHSGRALDTVTQADIISPYGATIAVDYPRYTAAAVMLETAERLTSEERQPALRLFLLLVGGLRTLAGDERPPALVLDAFLLRALAVSGYGMALDHCARCGGPGLHLSLSVPGGGVVCPQCRPHGAASVSAGAVRLLADLLRGDWDGALVSDARARREAGGIAAAYLQWHLERGLRALPYLERA</sequence>
<name>RECO_FRACC</name>
<gene>
    <name evidence="1" type="primary">recO</name>
    <name type="ordered locus">Francci3_1272</name>
</gene>
<reference key="1">
    <citation type="journal article" date="2007" name="Genome Res.">
        <title>Genome characteristics of facultatively symbiotic Frankia sp. strains reflect host range and host plant biogeography.</title>
        <authorList>
            <person name="Normand P."/>
            <person name="Lapierre P."/>
            <person name="Tisa L.S."/>
            <person name="Gogarten J.P."/>
            <person name="Alloisio N."/>
            <person name="Bagnarol E."/>
            <person name="Bassi C.A."/>
            <person name="Berry A.M."/>
            <person name="Bickhart D.M."/>
            <person name="Choisne N."/>
            <person name="Couloux A."/>
            <person name="Cournoyer B."/>
            <person name="Cruveiller S."/>
            <person name="Daubin V."/>
            <person name="Demange N."/>
            <person name="Francino M.P."/>
            <person name="Goltsman E."/>
            <person name="Huang Y."/>
            <person name="Kopp O.R."/>
            <person name="Labarre L."/>
            <person name="Lapidus A."/>
            <person name="Lavire C."/>
            <person name="Marechal J."/>
            <person name="Martinez M."/>
            <person name="Mastronunzio J.E."/>
            <person name="Mullin B.C."/>
            <person name="Niemann J."/>
            <person name="Pujic P."/>
            <person name="Rawnsley T."/>
            <person name="Rouy Z."/>
            <person name="Schenowitz C."/>
            <person name="Sellstedt A."/>
            <person name="Tavares F."/>
            <person name="Tomkins J.P."/>
            <person name="Vallenet D."/>
            <person name="Valverde C."/>
            <person name="Wall L.G."/>
            <person name="Wang Y."/>
            <person name="Medigue C."/>
            <person name="Benson D.R."/>
        </authorList>
    </citation>
    <scope>NUCLEOTIDE SEQUENCE [LARGE SCALE GENOMIC DNA]</scope>
    <source>
        <strain>DSM 45818 / CECT 9043 / HFP020203 / CcI3</strain>
    </source>
</reference>
<dbReference type="EMBL" id="CP000249">
    <property type="protein sequence ID" value="ABD10650.1"/>
    <property type="molecule type" value="Genomic_DNA"/>
</dbReference>
<dbReference type="SMR" id="Q2JDJ2"/>
<dbReference type="STRING" id="106370.Francci3_1272"/>
<dbReference type="KEGG" id="fra:Francci3_1272"/>
<dbReference type="eggNOG" id="COG1381">
    <property type="taxonomic scope" value="Bacteria"/>
</dbReference>
<dbReference type="HOGENOM" id="CLU_066632_1_1_11"/>
<dbReference type="PhylomeDB" id="Q2JDJ2"/>
<dbReference type="Proteomes" id="UP000001937">
    <property type="component" value="Chromosome"/>
</dbReference>
<dbReference type="GO" id="GO:0043590">
    <property type="term" value="C:bacterial nucleoid"/>
    <property type="evidence" value="ECO:0007669"/>
    <property type="project" value="TreeGrafter"/>
</dbReference>
<dbReference type="GO" id="GO:0006310">
    <property type="term" value="P:DNA recombination"/>
    <property type="evidence" value="ECO:0007669"/>
    <property type="project" value="UniProtKB-UniRule"/>
</dbReference>
<dbReference type="GO" id="GO:0006302">
    <property type="term" value="P:double-strand break repair"/>
    <property type="evidence" value="ECO:0007669"/>
    <property type="project" value="TreeGrafter"/>
</dbReference>
<dbReference type="Gene3D" id="2.40.50.140">
    <property type="entry name" value="Nucleic acid-binding proteins"/>
    <property type="match status" value="1"/>
</dbReference>
<dbReference type="Gene3D" id="1.20.1440.120">
    <property type="entry name" value="Recombination protein O, C-terminal domain"/>
    <property type="match status" value="1"/>
</dbReference>
<dbReference type="HAMAP" id="MF_00201">
    <property type="entry name" value="RecO"/>
    <property type="match status" value="1"/>
</dbReference>
<dbReference type="InterPro" id="IPR037278">
    <property type="entry name" value="ARFGAP/RecO"/>
</dbReference>
<dbReference type="InterPro" id="IPR022572">
    <property type="entry name" value="DNA_rep/recomb_RecO_N"/>
</dbReference>
<dbReference type="InterPro" id="IPR012340">
    <property type="entry name" value="NA-bd_OB-fold"/>
</dbReference>
<dbReference type="InterPro" id="IPR003717">
    <property type="entry name" value="RecO"/>
</dbReference>
<dbReference type="InterPro" id="IPR042242">
    <property type="entry name" value="RecO_C"/>
</dbReference>
<dbReference type="NCBIfam" id="TIGR00613">
    <property type="entry name" value="reco"/>
    <property type="match status" value="1"/>
</dbReference>
<dbReference type="PANTHER" id="PTHR33991">
    <property type="entry name" value="DNA REPAIR PROTEIN RECO"/>
    <property type="match status" value="1"/>
</dbReference>
<dbReference type="PANTHER" id="PTHR33991:SF1">
    <property type="entry name" value="DNA REPAIR PROTEIN RECO"/>
    <property type="match status" value="1"/>
</dbReference>
<dbReference type="Pfam" id="PF02565">
    <property type="entry name" value="RecO_C"/>
    <property type="match status" value="1"/>
</dbReference>
<dbReference type="Pfam" id="PF11967">
    <property type="entry name" value="RecO_N"/>
    <property type="match status" value="1"/>
</dbReference>
<dbReference type="SUPFAM" id="SSF57863">
    <property type="entry name" value="ArfGap/RecO-like zinc finger"/>
    <property type="match status" value="1"/>
</dbReference>
<dbReference type="SUPFAM" id="SSF50249">
    <property type="entry name" value="Nucleic acid-binding proteins"/>
    <property type="match status" value="1"/>
</dbReference>
<proteinExistence type="inferred from homology"/>
<feature type="chain" id="PRO_0000264817" description="DNA repair protein RecO">
    <location>
        <begin position="1"/>
        <end position="243"/>
    </location>
</feature>
<organism>
    <name type="scientific">Frankia casuarinae (strain DSM 45818 / CECT 9043 / HFP020203 / CcI3)</name>
    <dbReference type="NCBI Taxonomy" id="106370"/>
    <lineage>
        <taxon>Bacteria</taxon>
        <taxon>Bacillati</taxon>
        <taxon>Actinomycetota</taxon>
        <taxon>Actinomycetes</taxon>
        <taxon>Frankiales</taxon>
        <taxon>Frankiaceae</taxon>
        <taxon>Frankia</taxon>
    </lineage>
</organism>
<evidence type="ECO:0000255" key="1">
    <source>
        <dbReference type="HAMAP-Rule" id="MF_00201"/>
    </source>
</evidence>